<evidence type="ECO:0000255" key="1">
    <source>
        <dbReference type="HAMAP-Rule" id="MF_00203"/>
    </source>
</evidence>
<protein>
    <recommendedName>
        <fullName evidence="1">UvrABC system protein C</fullName>
        <shortName evidence="1">Protein UvrC</shortName>
    </recommendedName>
    <alternativeName>
        <fullName evidence="1">Excinuclease ABC subunit C</fullName>
    </alternativeName>
</protein>
<organism>
    <name type="scientific">Prochlorococcus marinus (strain NATL1A)</name>
    <dbReference type="NCBI Taxonomy" id="167555"/>
    <lineage>
        <taxon>Bacteria</taxon>
        <taxon>Bacillati</taxon>
        <taxon>Cyanobacteriota</taxon>
        <taxon>Cyanophyceae</taxon>
        <taxon>Synechococcales</taxon>
        <taxon>Prochlorococcaceae</taxon>
        <taxon>Prochlorococcus</taxon>
    </lineage>
</organism>
<reference key="1">
    <citation type="journal article" date="2007" name="PLoS Genet.">
        <title>Patterns and implications of gene gain and loss in the evolution of Prochlorococcus.</title>
        <authorList>
            <person name="Kettler G.C."/>
            <person name="Martiny A.C."/>
            <person name="Huang K."/>
            <person name="Zucker J."/>
            <person name="Coleman M.L."/>
            <person name="Rodrigue S."/>
            <person name="Chen F."/>
            <person name="Lapidus A."/>
            <person name="Ferriera S."/>
            <person name="Johnson J."/>
            <person name="Steglich C."/>
            <person name="Church G.M."/>
            <person name="Richardson P."/>
            <person name="Chisholm S.W."/>
        </authorList>
    </citation>
    <scope>NUCLEOTIDE SEQUENCE [LARGE SCALE GENOMIC DNA]</scope>
    <source>
        <strain>NATL1A</strain>
    </source>
</reference>
<comment type="function">
    <text evidence="1">The UvrABC repair system catalyzes the recognition and processing of DNA lesions. UvrC both incises the 5' and 3' sides of the lesion. The N-terminal half is responsible for the 3' incision and the C-terminal half is responsible for the 5' incision.</text>
</comment>
<comment type="subunit">
    <text evidence="1">Interacts with UvrB in an incision complex.</text>
</comment>
<comment type="subcellular location">
    <subcellularLocation>
        <location evidence="1">Cytoplasm</location>
    </subcellularLocation>
</comment>
<comment type="similarity">
    <text evidence="1">Belongs to the UvrC family.</text>
</comment>
<sequence length="640" mass="74220">MELIPLIRDKSRLSDFLKDIPNDPGCYLMKDGEDRLLYVGKSKKLRNRVRSYFRSGNELSPRISLMVRQVADIELIVTDNESEALTLESNLIKSHQPYFNVLLKDDKKYPYVCITWGDKYPRIFLTRKRRQRQLKDKYYGPYVDVYLLRKTLFSIKKLFPLRQRRIPLYKDRTCLNYSIGRCPGVCQEEISSEDYKNTLKRVEMIFQGRTDELRILLEKQMISFSESLKFEEAGSVRDQLKGIDRLYESQKMIIPDSSVCRDIIAMASEENISSVQIFQMRSGKLIGRLGYFSDNSNFNSSQILQQVIENHYSNVDPVEIPSEILVQHQLVNNILISDWLSEIKKQKVNINVPKRSRKAEIIKLVEKNANLELQRIKQSHDKNLVELDDLTNILDLENIPKRIECYDISHIQGSDAVASQVVFIDGIAARQHYRRYKIKSPNIKIGHSDDFESMAEVITRRFRRWARFKEEGGDINALLSNQSSVLDNLNLNDWPDLVVIDGGKGQLSSVVAALEELKLDQNLNVISLAKKKEEVFIPNVKQSLVTESNQPGMLLLRRLRDEAHRFAITFHRQKRSQRMKRSQLNEIPGLGPQRIKLLLEHFRSIEAIQMATFSELSSTPGLGRSTAVVIRNYFHPDKNK</sequence>
<name>UVRC_PROM1</name>
<accession>A2C249</accession>
<feature type="chain" id="PRO_1000077817" description="UvrABC system protein C">
    <location>
        <begin position="1"/>
        <end position="640"/>
    </location>
</feature>
<feature type="domain" description="GIY-YIG" evidence="1">
    <location>
        <begin position="22"/>
        <end position="101"/>
    </location>
</feature>
<feature type="domain" description="UVR" evidence="1">
    <location>
        <begin position="211"/>
        <end position="246"/>
    </location>
</feature>
<dbReference type="EMBL" id="CP000553">
    <property type="protein sequence ID" value="ABM75559.1"/>
    <property type="molecule type" value="Genomic_DNA"/>
</dbReference>
<dbReference type="RefSeq" id="WP_011823684.1">
    <property type="nucleotide sequence ID" value="NC_008819.1"/>
</dbReference>
<dbReference type="SMR" id="A2C249"/>
<dbReference type="KEGG" id="pme:NATL1_10011"/>
<dbReference type="eggNOG" id="COG0322">
    <property type="taxonomic scope" value="Bacteria"/>
</dbReference>
<dbReference type="HOGENOM" id="CLU_014841_3_2_3"/>
<dbReference type="Proteomes" id="UP000002592">
    <property type="component" value="Chromosome"/>
</dbReference>
<dbReference type="GO" id="GO:0005737">
    <property type="term" value="C:cytoplasm"/>
    <property type="evidence" value="ECO:0007669"/>
    <property type="project" value="UniProtKB-SubCell"/>
</dbReference>
<dbReference type="GO" id="GO:0009380">
    <property type="term" value="C:excinuclease repair complex"/>
    <property type="evidence" value="ECO:0007669"/>
    <property type="project" value="InterPro"/>
</dbReference>
<dbReference type="GO" id="GO:0003677">
    <property type="term" value="F:DNA binding"/>
    <property type="evidence" value="ECO:0007669"/>
    <property type="project" value="UniProtKB-UniRule"/>
</dbReference>
<dbReference type="GO" id="GO:0009381">
    <property type="term" value="F:excinuclease ABC activity"/>
    <property type="evidence" value="ECO:0007669"/>
    <property type="project" value="UniProtKB-UniRule"/>
</dbReference>
<dbReference type="GO" id="GO:0006289">
    <property type="term" value="P:nucleotide-excision repair"/>
    <property type="evidence" value="ECO:0007669"/>
    <property type="project" value="UniProtKB-UniRule"/>
</dbReference>
<dbReference type="GO" id="GO:0009432">
    <property type="term" value="P:SOS response"/>
    <property type="evidence" value="ECO:0007669"/>
    <property type="project" value="UniProtKB-UniRule"/>
</dbReference>
<dbReference type="CDD" id="cd10434">
    <property type="entry name" value="GIY-YIG_UvrC_Cho"/>
    <property type="match status" value="1"/>
</dbReference>
<dbReference type="FunFam" id="3.40.1440.10:FF:000001">
    <property type="entry name" value="UvrABC system protein C"/>
    <property type="match status" value="1"/>
</dbReference>
<dbReference type="Gene3D" id="1.10.150.20">
    <property type="entry name" value="5' to 3' exonuclease, C-terminal subdomain"/>
    <property type="match status" value="1"/>
</dbReference>
<dbReference type="Gene3D" id="3.40.1440.10">
    <property type="entry name" value="GIY-YIG endonuclease"/>
    <property type="match status" value="1"/>
</dbReference>
<dbReference type="Gene3D" id="3.30.420.340">
    <property type="entry name" value="UvrC, RNAse H endonuclease domain"/>
    <property type="match status" value="1"/>
</dbReference>
<dbReference type="HAMAP" id="MF_00203">
    <property type="entry name" value="UvrC"/>
    <property type="match status" value="1"/>
</dbReference>
<dbReference type="InterPro" id="IPR041663">
    <property type="entry name" value="DisA/LigA_HHH"/>
</dbReference>
<dbReference type="InterPro" id="IPR000305">
    <property type="entry name" value="GIY-YIG_endonuc"/>
</dbReference>
<dbReference type="InterPro" id="IPR035901">
    <property type="entry name" value="GIY-YIG_endonuc_sf"/>
</dbReference>
<dbReference type="InterPro" id="IPR047296">
    <property type="entry name" value="GIY-YIG_UvrC_Cho"/>
</dbReference>
<dbReference type="InterPro" id="IPR003583">
    <property type="entry name" value="Hlx-hairpin-Hlx_DNA-bd_motif"/>
</dbReference>
<dbReference type="InterPro" id="IPR010994">
    <property type="entry name" value="RuvA_2-like"/>
</dbReference>
<dbReference type="InterPro" id="IPR001943">
    <property type="entry name" value="UVR_dom"/>
</dbReference>
<dbReference type="InterPro" id="IPR036876">
    <property type="entry name" value="UVR_dom_sf"/>
</dbReference>
<dbReference type="InterPro" id="IPR050066">
    <property type="entry name" value="UvrABC_protein_C"/>
</dbReference>
<dbReference type="InterPro" id="IPR004791">
    <property type="entry name" value="UvrC"/>
</dbReference>
<dbReference type="InterPro" id="IPR001162">
    <property type="entry name" value="UvrC_RNase_H_dom"/>
</dbReference>
<dbReference type="InterPro" id="IPR038476">
    <property type="entry name" value="UvrC_RNase_H_dom_sf"/>
</dbReference>
<dbReference type="NCBIfam" id="NF001824">
    <property type="entry name" value="PRK00558.1-5"/>
    <property type="match status" value="1"/>
</dbReference>
<dbReference type="NCBIfam" id="TIGR00194">
    <property type="entry name" value="uvrC"/>
    <property type="match status" value="1"/>
</dbReference>
<dbReference type="PANTHER" id="PTHR30562:SF1">
    <property type="entry name" value="UVRABC SYSTEM PROTEIN C"/>
    <property type="match status" value="1"/>
</dbReference>
<dbReference type="PANTHER" id="PTHR30562">
    <property type="entry name" value="UVRC/OXIDOREDUCTASE"/>
    <property type="match status" value="1"/>
</dbReference>
<dbReference type="Pfam" id="PF01541">
    <property type="entry name" value="GIY-YIG"/>
    <property type="match status" value="1"/>
</dbReference>
<dbReference type="Pfam" id="PF12826">
    <property type="entry name" value="HHH_2"/>
    <property type="match status" value="1"/>
</dbReference>
<dbReference type="Pfam" id="PF22920">
    <property type="entry name" value="UvrC_RNaseH"/>
    <property type="match status" value="1"/>
</dbReference>
<dbReference type="Pfam" id="PF08459">
    <property type="entry name" value="UvrC_RNaseH_dom"/>
    <property type="match status" value="1"/>
</dbReference>
<dbReference type="SMART" id="SM00465">
    <property type="entry name" value="GIYc"/>
    <property type="match status" value="1"/>
</dbReference>
<dbReference type="SMART" id="SM00278">
    <property type="entry name" value="HhH1"/>
    <property type="match status" value="2"/>
</dbReference>
<dbReference type="SUPFAM" id="SSF46600">
    <property type="entry name" value="C-terminal UvrC-binding domain of UvrB"/>
    <property type="match status" value="1"/>
</dbReference>
<dbReference type="SUPFAM" id="SSF82771">
    <property type="entry name" value="GIY-YIG endonuclease"/>
    <property type="match status" value="1"/>
</dbReference>
<dbReference type="SUPFAM" id="SSF47781">
    <property type="entry name" value="RuvA domain 2-like"/>
    <property type="match status" value="1"/>
</dbReference>
<dbReference type="PROSITE" id="PS50164">
    <property type="entry name" value="GIY_YIG"/>
    <property type="match status" value="1"/>
</dbReference>
<dbReference type="PROSITE" id="PS50151">
    <property type="entry name" value="UVR"/>
    <property type="match status" value="1"/>
</dbReference>
<dbReference type="PROSITE" id="PS50165">
    <property type="entry name" value="UVRC"/>
    <property type="match status" value="1"/>
</dbReference>
<proteinExistence type="inferred from homology"/>
<keyword id="KW-0963">Cytoplasm</keyword>
<keyword id="KW-0227">DNA damage</keyword>
<keyword id="KW-0228">DNA excision</keyword>
<keyword id="KW-0234">DNA repair</keyword>
<keyword id="KW-0267">Excision nuclease</keyword>
<keyword id="KW-0742">SOS response</keyword>
<gene>
    <name evidence="1" type="primary">uvrC</name>
    <name type="ordered locus">NATL1_10011</name>
</gene>